<dbReference type="EMBL" id="CU928168">
    <property type="protein sequence ID" value="CAR22484.1"/>
    <property type="molecule type" value="Genomic_DNA"/>
</dbReference>
<dbReference type="RefSeq" id="XP_002552922.1">
    <property type="nucleotide sequence ID" value="XM_002552876.1"/>
</dbReference>
<dbReference type="SMR" id="C5DGE2"/>
<dbReference type="FunCoup" id="C5DGE2">
    <property type="interactions" value="120"/>
</dbReference>
<dbReference type="STRING" id="559295.C5DGE2"/>
<dbReference type="GeneID" id="8295148"/>
<dbReference type="KEGG" id="lth:KLTH0D04598g"/>
<dbReference type="eggNOG" id="ENOG502RXWH">
    <property type="taxonomic scope" value="Eukaryota"/>
</dbReference>
<dbReference type="HOGENOM" id="CLU_1129832_0_0_1"/>
<dbReference type="InParanoid" id="C5DGE2"/>
<dbReference type="OMA" id="HFVKFTQ"/>
<dbReference type="OrthoDB" id="4041888at2759"/>
<dbReference type="Proteomes" id="UP000002036">
    <property type="component" value="Chromosome D"/>
</dbReference>
<dbReference type="GO" id="GO:0005737">
    <property type="term" value="C:cytoplasm"/>
    <property type="evidence" value="ECO:0007669"/>
    <property type="project" value="UniProtKB-SubCell"/>
</dbReference>
<dbReference type="GO" id="GO:0005634">
    <property type="term" value="C:nucleus"/>
    <property type="evidence" value="ECO:0007669"/>
    <property type="project" value="UniProtKB-SubCell"/>
</dbReference>
<dbReference type="GO" id="GO:0003723">
    <property type="term" value="F:RNA binding"/>
    <property type="evidence" value="ECO:0007669"/>
    <property type="project" value="UniProtKB-KW"/>
</dbReference>
<dbReference type="GO" id="GO:0051028">
    <property type="term" value="P:mRNA transport"/>
    <property type="evidence" value="ECO:0007669"/>
    <property type="project" value="UniProtKB-KW"/>
</dbReference>
<dbReference type="Gene3D" id="1.20.200.20">
    <property type="entry name" value="She2 domain"/>
    <property type="match status" value="1"/>
</dbReference>
<dbReference type="InterPro" id="IPR024261">
    <property type="entry name" value="RNA-bd_She2"/>
</dbReference>
<dbReference type="InterPro" id="IPR036827">
    <property type="entry name" value="She2_dom_sf"/>
</dbReference>
<dbReference type="Pfam" id="PF11435">
    <property type="entry name" value="She2p"/>
    <property type="match status" value="1"/>
</dbReference>
<dbReference type="SUPFAM" id="SSF116942">
    <property type="entry name" value="RNA-binding protein She2p"/>
    <property type="match status" value="1"/>
</dbReference>
<gene>
    <name type="primary">SHE2</name>
    <name type="ordered locus">KLTH0D04598g</name>
</gene>
<protein>
    <recommendedName>
        <fullName>SWI5-dependent HO expression protein 2</fullName>
    </recommendedName>
</protein>
<accession>C5DGE2</accession>
<organism>
    <name type="scientific">Lachancea thermotolerans (strain ATCC 56472 / CBS 6340 / NRRL Y-8284)</name>
    <name type="common">Yeast</name>
    <name type="synonym">Kluyveromyces thermotolerans</name>
    <dbReference type="NCBI Taxonomy" id="559295"/>
    <lineage>
        <taxon>Eukaryota</taxon>
        <taxon>Fungi</taxon>
        <taxon>Dikarya</taxon>
        <taxon>Ascomycota</taxon>
        <taxon>Saccharomycotina</taxon>
        <taxon>Saccharomycetes</taxon>
        <taxon>Saccharomycetales</taxon>
        <taxon>Saccharomycetaceae</taxon>
        <taxon>Lachancea</taxon>
    </lineage>
</organism>
<feature type="chain" id="PRO_0000408919" description="SWI5-dependent HO expression protein 2">
    <location>
        <begin position="1"/>
        <end position="236"/>
    </location>
</feature>
<keyword id="KW-0963">Cytoplasm</keyword>
<keyword id="KW-0509">mRNA transport</keyword>
<keyword id="KW-0539">Nucleus</keyword>
<keyword id="KW-1185">Reference proteome</keyword>
<keyword id="KW-0694">RNA-binding</keyword>
<keyword id="KW-0813">Transport</keyword>
<name>SHE2_LACTC</name>
<comment type="function">
    <text evidence="1">RNA-binding protein that binds specific mRNAs including the ASH1 mRNA, coding for a repressor of the HO endonuclease. Part of the mRNA localization machinery that restricts accumulation of certain proteins to the bud and in the daughter cell (By similarity).</text>
</comment>
<comment type="subunit">
    <text evidence="1">Homodimer and homotetramer.</text>
</comment>
<comment type="subcellular location">
    <subcellularLocation>
        <location evidence="2">Cytoplasm</location>
    </subcellularLocation>
    <subcellularLocation>
        <location evidence="2">Nucleus</location>
    </subcellularLocation>
    <text evidence="2">Shuttles between the nucleus and cytoplasm and is exported in an mRNA-dependent manner. The presence in the nucleus is essential for PUF6 and LOC1 to bind the ASH1 mRNA.</text>
</comment>
<comment type="similarity">
    <text evidence="3">Belongs to the SHE2 family.</text>
</comment>
<proteinExistence type="inferred from homology"/>
<evidence type="ECO:0000250" key="1"/>
<evidence type="ECO:0000250" key="2">
    <source>
        <dbReference type="UniProtKB" id="P36068"/>
    </source>
</evidence>
<evidence type="ECO:0000305" key="3"/>
<sequence>MKNVTFPANENVLKSLQLAIQSYSNYLSSYIDALNKYISHQRRVSTLRFERATLIKYVKKLRFFNEELMSMDMVQQYRGGNLIKTAVCSLASFFIRCLEVMDLLNYYLTQSLKNETISKTLNRDLVVSEDCVVFLESTYRHYVKFTQWMLEALDIHDATLTVEVLQFARKCAKEDGLDLEETDDILLQEVGVVSSASEYQELLDEWCLVLSEQYMGLTKAFEAETTRWSEIFEGRK</sequence>
<reference key="1">
    <citation type="journal article" date="2009" name="Genome Res.">
        <title>Comparative genomics of protoploid Saccharomycetaceae.</title>
        <authorList>
            <consortium name="The Genolevures Consortium"/>
            <person name="Souciet J.-L."/>
            <person name="Dujon B."/>
            <person name="Gaillardin C."/>
            <person name="Johnston M."/>
            <person name="Baret P.V."/>
            <person name="Cliften P."/>
            <person name="Sherman D.J."/>
            <person name="Weissenbach J."/>
            <person name="Westhof E."/>
            <person name="Wincker P."/>
            <person name="Jubin C."/>
            <person name="Poulain J."/>
            <person name="Barbe V."/>
            <person name="Segurens B."/>
            <person name="Artiguenave F."/>
            <person name="Anthouard V."/>
            <person name="Vacherie B."/>
            <person name="Val M.-E."/>
            <person name="Fulton R.S."/>
            <person name="Minx P."/>
            <person name="Wilson R."/>
            <person name="Durrens P."/>
            <person name="Jean G."/>
            <person name="Marck C."/>
            <person name="Martin T."/>
            <person name="Nikolski M."/>
            <person name="Rolland T."/>
            <person name="Seret M.-L."/>
            <person name="Casaregola S."/>
            <person name="Despons L."/>
            <person name="Fairhead C."/>
            <person name="Fischer G."/>
            <person name="Lafontaine I."/>
            <person name="Leh V."/>
            <person name="Lemaire M."/>
            <person name="de Montigny J."/>
            <person name="Neuveglise C."/>
            <person name="Thierry A."/>
            <person name="Blanc-Lenfle I."/>
            <person name="Bleykasten C."/>
            <person name="Diffels J."/>
            <person name="Fritsch E."/>
            <person name="Frangeul L."/>
            <person name="Goeffon A."/>
            <person name="Jauniaux N."/>
            <person name="Kachouri-Lafond R."/>
            <person name="Payen C."/>
            <person name="Potier S."/>
            <person name="Pribylova L."/>
            <person name="Ozanne C."/>
            <person name="Richard G.-F."/>
            <person name="Sacerdot C."/>
            <person name="Straub M.-L."/>
            <person name="Talla E."/>
        </authorList>
    </citation>
    <scope>NUCLEOTIDE SEQUENCE [LARGE SCALE GENOMIC DNA]</scope>
    <source>
        <strain>ATCC 56472 / CBS 6340 / NRRL Y-8284</strain>
    </source>
</reference>